<comment type="function">
    <text evidence="1">Binds as a heterodimer with protein bS6 to the central domain of the 16S rRNA, where it helps stabilize the platform of the 30S subunit.</text>
</comment>
<comment type="subunit">
    <text evidence="1">Part of the 30S ribosomal subunit. Forms a tight heterodimer with protein bS6.</text>
</comment>
<comment type="similarity">
    <text evidence="1">Belongs to the bacterial ribosomal protein bS18 family.</text>
</comment>
<proteinExistence type="inferred from homology"/>
<accession>C5D9X4</accession>
<sequence length="78" mass="8926">MAGRKGGRAKRRKVCYFTANGITHIDYKDVDLLKKFISERGKILPRRVTGTSAKYQRKLTVAIKRARQMALLPYVADE</sequence>
<organism>
    <name type="scientific">Geobacillus sp. (strain WCH70)</name>
    <dbReference type="NCBI Taxonomy" id="471223"/>
    <lineage>
        <taxon>Bacteria</taxon>
        <taxon>Bacillati</taxon>
        <taxon>Bacillota</taxon>
        <taxon>Bacilli</taxon>
        <taxon>Bacillales</taxon>
        <taxon>Anoxybacillaceae</taxon>
        <taxon>Geobacillus</taxon>
    </lineage>
</organism>
<protein>
    <recommendedName>
        <fullName evidence="1">Small ribosomal subunit protein bS18</fullName>
    </recommendedName>
    <alternativeName>
        <fullName evidence="2">30S ribosomal protein S18</fullName>
    </alternativeName>
</protein>
<evidence type="ECO:0000255" key="1">
    <source>
        <dbReference type="HAMAP-Rule" id="MF_00270"/>
    </source>
</evidence>
<evidence type="ECO:0000305" key="2"/>
<keyword id="KW-0687">Ribonucleoprotein</keyword>
<keyword id="KW-0689">Ribosomal protein</keyword>
<keyword id="KW-0694">RNA-binding</keyword>
<keyword id="KW-0699">rRNA-binding</keyword>
<name>RS18_GEOSW</name>
<feature type="chain" id="PRO_1000204729" description="Small ribosomal subunit protein bS18">
    <location>
        <begin position="1"/>
        <end position="78"/>
    </location>
</feature>
<dbReference type="EMBL" id="CP001638">
    <property type="protein sequence ID" value="ACS26052.1"/>
    <property type="molecule type" value="Genomic_DNA"/>
</dbReference>
<dbReference type="SMR" id="C5D9X4"/>
<dbReference type="STRING" id="471223.GWCH70_3415"/>
<dbReference type="KEGG" id="gwc:GWCH70_3415"/>
<dbReference type="eggNOG" id="COG0238">
    <property type="taxonomic scope" value="Bacteria"/>
</dbReference>
<dbReference type="HOGENOM" id="CLU_148710_2_2_9"/>
<dbReference type="OrthoDB" id="9812008at2"/>
<dbReference type="GO" id="GO:0022627">
    <property type="term" value="C:cytosolic small ribosomal subunit"/>
    <property type="evidence" value="ECO:0007669"/>
    <property type="project" value="TreeGrafter"/>
</dbReference>
<dbReference type="GO" id="GO:0070181">
    <property type="term" value="F:small ribosomal subunit rRNA binding"/>
    <property type="evidence" value="ECO:0007669"/>
    <property type="project" value="TreeGrafter"/>
</dbReference>
<dbReference type="GO" id="GO:0003735">
    <property type="term" value="F:structural constituent of ribosome"/>
    <property type="evidence" value="ECO:0007669"/>
    <property type="project" value="InterPro"/>
</dbReference>
<dbReference type="GO" id="GO:0006412">
    <property type="term" value="P:translation"/>
    <property type="evidence" value="ECO:0007669"/>
    <property type="project" value="UniProtKB-UniRule"/>
</dbReference>
<dbReference type="FunFam" id="4.10.640.10:FF:000003">
    <property type="entry name" value="30S ribosomal protein S18"/>
    <property type="match status" value="1"/>
</dbReference>
<dbReference type="Gene3D" id="4.10.640.10">
    <property type="entry name" value="Ribosomal protein S18"/>
    <property type="match status" value="1"/>
</dbReference>
<dbReference type="HAMAP" id="MF_00270">
    <property type="entry name" value="Ribosomal_bS18"/>
    <property type="match status" value="1"/>
</dbReference>
<dbReference type="InterPro" id="IPR001648">
    <property type="entry name" value="Ribosomal_bS18"/>
</dbReference>
<dbReference type="InterPro" id="IPR018275">
    <property type="entry name" value="Ribosomal_bS18_CS"/>
</dbReference>
<dbReference type="InterPro" id="IPR036870">
    <property type="entry name" value="Ribosomal_bS18_sf"/>
</dbReference>
<dbReference type="NCBIfam" id="TIGR00165">
    <property type="entry name" value="S18"/>
    <property type="match status" value="1"/>
</dbReference>
<dbReference type="PANTHER" id="PTHR13479">
    <property type="entry name" value="30S RIBOSOMAL PROTEIN S18"/>
    <property type="match status" value="1"/>
</dbReference>
<dbReference type="PANTHER" id="PTHR13479:SF40">
    <property type="entry name" value="SMALL RIBOSOMAL SUBUNIT PROTEIN BS18M"/>
    <property type="match status" value="1"/>
</dbReference>
<dbReference type="Pfam" id="PF01084">
    <property type="entry name" value="Ribosomal_S18"/>
    <property type="match status" value="1"/>
</dbReference>
<dbReference type="PRINTS" id="PR00974">
    <property type="entry name" value="RIBOSOMALS18"/>
</dbReference>
<dbReference type="SUPFAM" id="SSF46911">
    <property type="entry name" value="Ribosomal protein S18"/>
    <property type="match status" value="1"/>
</dbReference>
<dbReference type="PROSITE" id="PS00057">
    <property type="entry name" value="RIBOSOMAL_S18"/>
    <property type="match status" value="1"/>
</dbReference>
<reference key="1">
    <citation type="submission" date="2009-06" db="EMBL/GenBank/DDBJ databases">
        <title>Complete sequence of chromosome of Geopacillus sp. WCH70.</title>
        <authorList>
            <consortium name="US DOE Joint Genome Institute"/>
            <person name="Lucas S."/>
            <person name="Copeland A."/>
            <person name="Lapidus A."/>
            <person name="Glavina del Rio T."/>
            <person name="Dalin E."/>
            <person name="Tice H."/>
            <person name="Bruce D."/>
            <person name="Goodwin L."/>
            <person name="Pitluck S."/>
            <person name="Chertkov O."/>
            <person name="Brettin T."/>
            <person name="Detter J.C."/>
            <person name="Han C."/>
            <person name="Larimer F."/>
            <person name="Land M."/>
            <person name="Hauser L."/>
            <person name="Kyrpides N."/>
            <person name="Mikhailova N."/>
            <person name="Brumm P."/>
            <person name="Mead D.A."/>
            <person name="Richardson P."/>
        </authorList>
    </citation>
    <scope>NUCLEOTIDE SEQUENCE [LARGE SCALE GENOMIC DNA]</scope>
    <source>
        <strain>WCH70</strain>
    </source>
</reference>
<gene>
    <name evidence="1" type="primary">rpsR</name>
    <name type="ordered locus">GWCH70_3415</name>
</gene>